<name>GATA_SALTO</name>
<sequence length="491" mass="51034">MTDLTSFSAAELAGLVARGESSAVEVTQAHLDRISAVDDRVHAFLHVDTEGALDAARDVDSRRAAGEPLGPLAGVPVAVKDVLTTKGVPTTAGSKILADWRPPYDSTIVRRLRAAGTVMLGKTNMDEFAMGSSTEYSAFGPTHNPWDLSRIPGGSGGGSSAALAAYETPLSIGSDTGGSIRQPGAVTGTVGVKPTYGGTSRYGLVAFSSSLDTPGPCARTVLDAALLHEVIGGHDPLDSTSIPAPVPDVVAAARLGASGDLTGVRLGVVREFAGEGAEPGVLAAFHAAVETLTKLGAEVVEVSCPHFQYALPAYYLIAPSECSSNLARFDGVRFGLRVGDDGIRSLEEVMSATREAGFGPEVKRRVMLGTYALSSGYYDAYYGQAQKVRTLISRDFTTAFEQVDALISPTTPFVAFPVGARTADPYQMYLADLFTIPSNLYGGPGISVPCGLADGLPVGLQVMAPTMADDRMYRVAAALESVVGPFTPPAL</sequence>
<feature type="chain" id="PRO_1000076142" description="Glutamyl-tRNA(Gln) amidotransferase subunit A">
    <location>
        <begin position="1"/>
        <end position="491"/>
    </location>
</feature>
<feature type="active site" description="Charge relay system" evidence="1">
    <location>
        <position position="80"/>
    </location>
</feature>
<feature type="active site" description="Charge relay system" evidence="1">
    <location>
        <position position="155"/>
    </location>
</feature>
<feature type="active site" description="Acyl-ester intermediate" evidence="1">
    <location>
        <position position="179"/>
    </location>
</feature>
<protein>
    <recommendedName>
        <fullName evidence="1">Glutamyl-tRNA(Gln) amidotransferase subunit A</fullName>
        <shortName evidence="1">Glu-ADT subunit A</shortName>
        <ecNumber evidence="1">6.3.5.7</ecNumber>
    </recommendedName>
</protein>
<evidence type="ECO:0000255" key="1">
    <source>
        <dbReference type="HAMAP-Rule" id="MF_00120"/>
    </source>
</evidence>
<comment type="function">
    <text evidence="1">Allows the formation of correctly charged Gln-tRNA(Gln) through the transamidation of misacylated Glu-tRNA(Gln) in organisms which lack glutaminyl-tRNA synthetase. The reaction takes place in the presence of glutamine and ATP through an activated gamma-phospho-Glu-tRNA(Gln).</text>
</comment>
<comment type="catalytic activity">
    <reaction evidence="1">
        <text>L-glutamyl-tRNA(Gln) + L-glutamine + ATP + H2O = L-glutaminyl-tRNA(Gln) + L-glutamate + ADP + phosphate + H(+)</text>
        <dbReference type="Rhea" id="RHEA:17521"/>
        <dbReference type="Rhea" id="RHEA-COMP:9681"/>
        <dbReference type="Rhea" id="RHEA-COMP:9684"/>
        <dbReference type="ChEBI" id="CHEBI:15377"/>
        <dbReference type="ChEBI" id="CHEBI:15378"/>
        <dbReference type="ChEBI" id="CHEBI:29985"/>
        <dbReference type="ChEBI" id="CHEBI:30616"/>
        <dbReference type="ChEBI" id="CHEBI:43474"/>
        <dbReference type="ChEBI" id="CHEBI:58359"/>
        <dbReference type="ChEBI" id="CHEBI:78520"/>
        <dbReference type="ChEBI" id="CHEBI:78521"/>
        <dbReference type="ChEBI" id="CHEBI:456216"/>
        <dbReference type="EC" id="6.3.5.7"/>
    </reaction>
</comment>
<comment type="subunit">
    <text evidence="1">Heterotrimer of A, B and C subunits.</text>
</comment>
<comment type="similarity">
    <text evidence="1">Belongs to the amidase family. GatA subfamily.</text>
</comment>
<organism>
    <name type="scientific">Salinispora tropica (strain ATCC BAA-916 / DSM 44818 / JCM 13857 / NBRC 105044 / CNB-440)</name>
    <dbReference type="NCBI Taxonomy" id="369723"/>
    <lineage>
        <taxon>Bacteria</taxon>
        <taxon>Bacillati</taxon>
        <taxon>Actinomycetota</taxon>
        <taxon>Actinomycetes</taxon>
        <taxon>Micromonosporales</taxon>
        <taxon>Micromonosporaceae</taxon>
        <taxon>Salinispora</taxon>
    </lineage>
</organism>
<keyword id="KW-0067">ATP-binding</keyword>
<keyword id="KW-0436">Ligase</keyword>
<keyword id="KW-0547">Nucleotide-binding</keyword>
<keyword id="KW-0648">Protein biosynthesis</keyword>
<keyword id="KW-1185">Reference proteome</keyword>
<dbReference type="EC" id="6.3.5.7" evidence="1"/>
<dbReference type="EMBL" id="CP000667">
    <property type="protein sequence ID" value="ABP53690.1"/>
    <property type="molecule type" value="Genomic_DNA"/>
</dbReference>
<dbReference type="RefSeq" id="WP_011905122.1">
    <property type="nucleotide sequence ID" value="NC_009380.1"/>
</dbReference>
<dbReference type="SMR" id="A4X490"/>
<dbReference type="STRING" id="369723.Strop_1220"/>
<dbReference type="KEGG" id="stp:Strop_1220"/>
<dbReference type="PATRIC" id="fig|369723.5.peg.1243"/>
<dbReference type="eggNOG" id="COG0154">
    <property type="taxonomic scope" value="Bacteria"/>
</dbReference>
<dbReference type="HOGENOM" id="CLU_009600_0_3_11"/>
<dbReference type="Proteomes" id="UP000000235">
    <property type="component" value="Chromosome"/>
</dbReference>
<dbReference type="GO" id="GO:0030956">
    <property type="term" value="C:glutamyl-tRNA(Gln) amidotransferase complex"/>
    <property type="evidence" value="ECO:0007669"/>
    <property type="project" value="InterPro"/>
</dbReference>
<dbReference type="GO" id="GO:0005524">
    <property type="term" value="F:ATP binding"/>
    <property type="evidence" value="ECO:0007669"/>
    <property type="project" value="UniProtKB-KW"/>
</dbReference>
<dbReference type="GO" id="GO:0050567">
    <property type="term" value="F:glutaminyl-tRNA synthase (glutamine-hydrolyzing) activity"/>
    <property type="evidence" value="ECO:0007669"/>
    <property type="project" value="UniProtKB-UniRule"/>
</dbReference>
<dbReference type="GO" id="GO:0006412">
    <property type="term" value="P:translation"/>
    <property type="evidence" value="ECO:0007669"/>
    <property type="project" value="UniProtKB-UniRule"/>
</dbReference>
<dbReference type="Gene3D" id="3.90.1300.10">
    <property type="entry name" value="Amidase signature (AS) domain"/>
    <property type="match status" value="1"/>
</dbReference>
<dbReference type="HAMAP" id="MF_00120">
    <property type="entry name" value="GatA"/>
    <property type="match status" value="1"/>
</dbReference>
<dbReference type="InterPro" id="IPR000120">
    <property type="entry name" value="Amidase"/>
</dbReference>
<dbReference type="InterPro" id="IPR020556">
    <property type="entry name" value="Amidase_CS"/>
</dbReference>
<dbReference type="InterPro" id="IPR023631">
    <property type="entry name" value="Amidase_dom"/>
</dbReference>
<dbReference type="InterPro" id="IPR036928">
    <property type="entry name" value="AS_sf"/>
</dbReference>
<dbReference type="InterPro" id="IPR004412">
    <property type="entry name" value="GatA"/>
</dbReference>
<dbReference type="NCBIfam" id="TIGR00132">
    <property type="entry name" value="gatA"/>
    <property type="match status" value="1"/>
</dbReference>
<dbReference type="PANTHER" id="PTHR11895:SF151">
    <property type="entry name" value="GLUTAMYL-TRNA(GLN) AMIDOTRANSFERASE SUBUNIT A"/>
    <property type="match status" value="1"/>
</dbReference>
<dbReference type="PANTHER" id="PTHR11895">
    <property type="entry name" value="TRANSAMIDASE"/>
    <property type="match status" value="1"/>
</dbReference>
<dbReference type="Pfam" id="PF01425">
    <property type="entry name" value="Amidase"/>
    <property type="match status" value="1"/>
</dbReference>
<dbReference type="SUPFAM" id="SSF75304">
    <property type="entry name" value="Amidase signature (AS) enzymes"/>
    <property type="match status" value="1"/>
</dbReference>
<dbReference type="PROSITE" id="PS00571">
    <property type="entry name" value="AMIDASES"/>
    <property type="match status" value="1"/>
</dbReference>
<gene>
    <name evidence="1" type="primary">gatA</name>
    <name type="ordered locus">Strop_1220</name>
</gene>
<accession>A4X490</accession>
<reference key="1">
    <citation type="journal article" date="2007" name="Proc. Natl. Acad. Sci. U.S.A.">
        <title>Genome sequencing reveals complex secondary metabolome in the marine actinomycete Salinispora tropica.</title>
        <authorList>
            <person name="Udwary D.W."/>
            <person name="Zeigler L."/>
            <person name="Asolkar R.N."/>
            <person name="Singan V."/>
            <person name="Lapidus A."/>
            <person name="Fenical W."/>
            <person name="Jensen P.R."/>
            <person name="Moore B.S."/>
        </authorList>
    </citation>
    <scope>NUCLEOTIDE SEQUENCE [LARGE SCALE GENOMIC DNA]</scope>
    <source>
        <strain>ATCC BAA-916 / DSM 44818 / JCM 13857 / NBRC 105044 / CNB-440</strain>
    </source>
</reference>
<proteinExistence type="inferred from homology"/>